<feature type="signal peptide" evidence="2">
    <location>
        <begin position="1"/>
        <end position="25"/>
    </location>
</feature>
<feature type="chain" id="PRO_0000008696" description="Expansin-A15">
    <location>
        <begin position="26"/>
        <end position="253"/>
    </location>
</feature>
<feature type="domain" description="Expansin-like EG45" evidence="4">
    <location>
        <begin position="48"/>
        <end position="160"/>
    </location>
</feature>
<feature type="domain" description="Expansin-like CBD" evidence="3">
    <location>
        <begin position="170"/>
        <end position="249"/>
    </location>
</feature>
<sequence length="253" mass="27077">MFMGKMGLLGIALFCFAAMVCSVHGYDAGWVNAHATFYGGSDASGTMGGACGYGNLYSQGYGTNTAALSTALFNNGLSCGACFEIKCQSDGAWCLPGAIIVTATNFCPPNNALPNNAGGWCNPPLHHFDLSQPVFQRIAQYKAGVVPVSYRRVPCMRRGGIRFTINGHSYFNLVLVTNVGGAGDVHSVAVKGSRTRWQQMSRNWGQNWQSNNLLNGQALSFKVTASDGRTVVSNNIAPASWSFGQTFTGRQFR</sequence>
<keyword id="KW-0134">Cell wall</keyword>
<keyword id="KW-0961">Cell wall biogenesis/degradation</keyword>
<keyword id="KW-0472">Membrane</keyword>
<keyword id="KW-1185">Reference proteome</keyword>
<keyword id="KW-0964">Secreted</keyword>
<keyword id="KW-0732">Signal</keyword>
<evidence type="ECO:0000250" key="1"/>
<evidence type="ECO:0000255" key="2"/>
<evidence type="ECO:0000255" key="3">
    <source>
        <dbReference type="PROSITE-ProRule" id="PRU00078"/>
    </source>
</evidence>
<evidence type="ECO:0000255" key="4">
    <source>
        <dbReference type="PROSITE-ProRule" id="PRU00079"/>
    </source>
</evidence>
<evidence type="ECO:0000305" key="5"/>
<reference key="1">
    <citation type="journal article" date="1999" name="Nature">
        <title>Sequence and analysis of chromosome 2 of the plant Arabidopsis thaliana.</title>
        <authorList>
            <person name="Lin X."/>
            <person name="Kaul S."/>
            <person name="Rounsley S.D."/>
            <person name="Shea T.P."/>
            <person name="Benito M.-I."/>
            <person name="Town C.D."/>
            <person name="Fujii C.Y."/>
            <person name="Mason T.M."/>
            <person name="Bowman C.L."/>
            <person name="Barnstead M.E."/>
            <person name="Feldblyum T.V."/>
            <person name="Buell C.R."/>
            <person name="Ketchum K.A."/>
            <person name="Lee J.J."/>
            <person name="Ronning C.M."/>
            <person name="Koo H.L."/>
            <person name="Moffat K.S."/>
            <person name="Cronin L.A."/>
            <person name="Shen M."/>
            <person name="Pai G."/>
            <person name="Van Aken S."/>
            <person name="Umayam L."/>
            <person name="Tallon L.J."/>
            <person name="Gill J.E."/>
            <person name="Adams M.D."/>
            <person name="Carrera A.J."/>
            <person name="Creasy T.H."/>
            <person name="Goodman H.M."/>
            <person name="Somerville C.R."/>
            <person name="Copenhaver G.P."/>
            <person name="Preuss D."/>
            <person name="Nierman W.C."/>
            <person name="White O."/>
            <person name="Eisen J.A."/>
            <person name="Salzberg S.L."/>
            <person name="Fraser C.M."/>
            <person name="Venter J.C."/>
        </authorList>
    </citation>
    <scope>NUCLEOTIDE SEQUENCE [LARGE SCALE GENOMIC DNA]</scope>
    <source>
        <strain>cv. Columbia</strain>
    </source>
</reference>
<reference key="2">
    <citation type="journal article" date="2017" name="Plant J.">
        <title>Araport11: a complete reannotation of the Arabidopsis thaliana reference genome.</title>
        <authorList>
            <person name="Cheng C.Y."/>
            <person name="Krishnakumar V."/>
            <person name="Chan A.P."/>
            <person name="Thibaud-Nissen F."/>
            <person name="Schobel S."/>
            <person name="Town C.D."/>
        </authorList>
    </citation>
    <scope>GENOME REANNOTATION</scope>
    <source>
        <strain>cv. Columbia</strain>
    </source>
</reference>
<reference key="3">
    <citation type="journal article" date="2003" name="Science">
        <title>Empirical analysis of transcriptional activity in the Arabidopsis genome.</title>
        <authorList>
            <person name="Yamada K."/>
            <person name="Lim J."/>
            <person name="Dale J.M."/>
            <person name="Chen H."/>
            <person name="Shinn P."/>
            <person name="Palm C.J."/>
            <person name="Southwick A.M."/>
            <person name="Wu H.C."/>
            <person name="Kim C.J."/>
            <person name="Nguyen M."/>
            <person name="Pham P.K."/>
            <person name="Cheuk R.F."/>
            <person name="Karlin-Newmann G."/>
            <person name="Liu S.X."/>
            <person name="Lam B."/>
            <person name="Sakano H."/>
            <person name="Wu T."/>
            <person name="Yu G."/>
            <person name="Miranda M."/>
            <person name="Quach H.L."/>
            <person name="Tripp M."/>
            <person name="Chang C.H."/>
            <person name="Lee J.M."/>
            <person name="Toriumi M.J."/>
            <person name="Chan M.M."/>
            <person name="Tang C.C."/>
            <person name="Onodera C.S."/>
            <person name="Deng J.M."/>
            <person name="Akiyama K."/>
            <person name="Ansari Y."/>
            <person name="Arakawa T."/>
            <person name="Banh J."/>
            <person name="Banno F."/>
            <person name="Bowser L."/>
            <person name="Brooks S.Y."/>
            <person name="Carninci P."/>
            <person name="Chao Q."/>
            <person name="Choy N."/>
            <person name="Enju A."/>
            <person name="Goldsmith A.D."/>
            <person name="Gurjal M."/>
            <person name="Hansen N.F."/>
            <person name="Hayashizaki Y."/>
            <person name="Johnson-Hopson C."/>
            <person name="Hsuan V.W."/>
            <person name="Iida K."/>
            <person name="Karnes M."/>
            <person name="Khan S."/>
            <person name="Koesema E."/>
            <person name="Ishida J."/>
            <person name="Jiang P.X."/>
            <person name="Jones T."/>
            <person name="Kawai J."/>
            <person name="Kamiya A."/>
            <person name="Meyers C."/>
            <person name="Nakajima M."/>
            <person name="Narusaka M."/>
            <person name="Seki M."/>
            <person name="Sakurai T."/>
            <person name="Satou M."/>
            <person name="Tamse R."/>
            <person name="Vaysberg M."/>
            <person name="Wallender E.K."/>
            <person name="Wong C."/>
            <person name="Yamamura Y."/>
            <person name="Yuan S."/>
            <person name="Shinozaki K."/>
            <person name="Davis R.W."/>
            <person name="Theologis A."/>
            <person name="Ecker J.R."/>
        </authorList>
    </citation>
    <scope>NUCLEOTIDE SEQUENCE [LARGE SCALE MRNA]</scope>
    <source>
        <strain>cv. Columbia</strain>
    </source>
</reference>
<reference key="4">
    <citation type="journal article" date="2004" name="Plant Mol. Biol.">
        <title>Nomenclature for members of the expansin superfamily of genes and proteins.</title>
        <authorList>
            <person name="Kende H."/>
            <person name="Bradford K.J."/>
            <person name="Brummell D.A."/>
            <person name="Cho H.-T."/>
            <person name="Cosgrove D.J."/>
            <person name="Fleming A.J."/>
            <person name="Gehring C."/>
            <person name="Lee Y."/>
            <person name="McQueen-Mason S.J."/>
            <person name="Rose J.K.C."/>
            <person name="Voesenek L.A.C."/>
        </authorList>
    </citation>
    <scope>NOMENCLATURE</scope>
</reference>
<comment type="function">
    <text evidence="1">Causes loosening and extension of plant cell walls by disrupting non-covalent bonding between cellulose microfibrils and matrix glucans. No enzymatic activity has been found (By similarity).</text>
</comment>
<comment type="subcellular location">
    <subcellularLocation>
        <location>Secreted</location>
        <location>Cell wall</location>
    </subcellularLocation>
    <subcellularLocation>
        <location>Membrane</location>
        <topology>Peripheral membrane protein</topology>
    </subcellularLocation>
</comment>
<comment type="similarity">
    <text evidence="5">Belongs to the expansin family. Expansin A subfamily.</text>
</comment>
<comment type="sequence caution" evidence="5">
    <conflict type="erroneous gene model prediction">
        <sequence resource="EMBL-CDS" id="AAC32927"/>
    </conflict>
</comment>
<comment type="online information" name="EXPANSIN homepage">
    <link uri="https://www.dept.psu.edu/biology/groups/expansins/index.htm"/>
</comment>
<protein>
    <recommendedName>
        <fullName>Expansin-A15</fullName>
        <shortName>AtEXPA15</shortName>
    </recommendedName>
    <alternativeName>
        <fullName>Alpha-expansin-15</fullName>
        <shortName>At-EXP15</shortName>
        <shortName>AtEx15</shortName>
    </alternativeName>
    <alternativeName>
        <fullName>Ath-ExpAlpha-1.3</fullName>
    </alternativeName>
</protein>
<proteinExistence type="evidence at transcript level"/>
<dbReference type="EMBL" id="AC004138">
    <property type="protein sequence ID" value="AAC32927.1"/>
    <property type="status" value="ALT_SEQ"/>
    <property type="molecule type" value="Genomic_DNA"/>
</dbReference>
<dbReference type="EMBL" id="CP002685">
    <property type="protein sequence ID" value="AEC05663.1"/>
    <property type="molecule type" value="Genomic_DNA"/>
</dbReference>
<dbReference type="EMBL" id="AY072167">
    <property type="protein sequence ID" value="AAL59989.1"/>
    <property type="molecule type" value="mRNA"/>
</dbReference>
<dbReference type="EMBL" id="AY117342">
    <property type="protein sequence ID" value="AAM51417.1"/>
    <property type="molecule type" value="mRNA"/>
</dbReference>
<dbReference type="PIR" id="C84444">
    <property type="entry name" value="C84444"/>
</dbReference>
<dbReference type="RefSeq" id="NP_178409.2">
    <property type="nucleotide sequence ID" value="NM_126361.4"/>
</dbReference>
<dbReference type="SMR" id="O80622"/>
<dbReference type="FunCoup" id="O80622">
    <property type="interactions" value="5"/>
</dbReference>
<dbReference type="STRING" id="3702.O80622"/>
<dbReference type="PaxDb" id="3702-AT2G03090.1"/>
<dbReference type="ProteomicsDB" id="222307"/>
<dbReference type="EnsemblPlants" id="AT2G03090.1">
    <property type="protein sequence ID" value="AT2G03090.1"/>
    <property type="gene ID" value="AT2G03090"/>
</dbReference>
<dbReference type="GeneID" id="814838"/>
<dbReference type="Gramene" id="AT2G03090.1">
    <property type="protein sequence ID" value="AT2G03090.1"/>
    <property type="gene ID" value="AT2G03090"/>
</dbReference>
<dbReference type="KEGG" id="ath:AT2G03090"/>
<dbReference type="Araport" id="AT2G03090"/>
<dbReference type="TAIR" id="AT2G03090">
    <property type="gene designation" value="EXPA15"/>
</dbReference>
<dbReference type="eggNOG" id="ENOG502QPUJ">
    <property type="taxonomic scope" value="Eukaryota"/>
</dbReference>
<dbReference type="HOGENOM" id="CLU_027462_0_1_1"/>
<dbReference type="InParanoid" id="O80622"/>
<dbReference type="OMA" id="VCSVHGY"/>
<dbReference type="PhylomeDB" id="O80622"/>
<dbReference type="PRO" id="PR:O80622"/>
<dbReference type="Proteomes" id="UP000006548">
    <property type="component" value="Chromosome 2"/>
</dbReference>
<dbReference type="ExpressionAtlas" id="O80622">
    <property type="expression patterns" value="baseline and differential"/>
</dbReference>
<dbReference type="GO" id="GO:0005576">
    <property type="term" value="C:extracellular region"/>
    <property type="evidence" value="ECO:0007669"/>
    <property type="project" value="UniProtKB-KW"/>
</dbReference>
<dbReference type="GO" id="GO:0016020">
    <property type="term" value="C:membrane"/>
    <property type="evidence" value="ECO:0007669"/>
    <property type="project" value="UniProtKB-SubCell"/>
</dbReference>
<dbReference type="GO" id="GO:0009828">
    <property type="term" value="P:plant-type cell wall loosening"/>
    <property type="evidence" value="ECO:0000250"/>
    <property type="project" value="UniProtKB"/>
</dbReference>
<dbReference type="GO" id="GO:0006949">
    <property type="term" value="P:syncytium formation"/>
    <property type="evidence" value="ECO:0000270"/>
    <property type="project" value="TAIR"/>
</dbReference>
<dbReference type="CDD" id="cd22274">
    <property type="entry name" value="DPBB_EXPA_N"/>
    <property type="match status" value="1"/>
</dbReference>
<dbReference type="FunFam" id="2.40.40.10:FF:000001">
    <property type="entry name" value="Expansin"/>
    <property type="match status" value="1"/>
</dbReference>
<dbReference type="FunFam" id="2.60.40.760:FF:000001">
    <property type="entry name" value="Expansin"/>
    <property type="match status" value="1"/>
</dbReference>
<dbReference type="Gene3D" id="2.60.40.760">
    <property type="entry name" value="Expansin, cellulose-binding-like domain"/>
    <property type="match status" value="1"/>
</dbReference>
<dbReference type="Gene3D" id="2.40.40.10">
    <property type="entry name" value="RlpA-like domain"/>
    <property type="match status" value="1"/>
</dbReference>
<dbReference type="InterPro" id="IPR007118">
    <property type="entry name" value="Expan_Lol_pI"/>
</dbReference>
<dbReference type="InterPro" id="IPR002963">
    <property type="entry name" value="Expansin"/>
</dbReference>
<dbReference type="InterPro" id="IPR007112">
    <property type="entry name" value="Expansin/allergen_DPBB_dom"/>
</dbReference>
<dbReference type="InterPro" id="IPR007117">
    <property type="entry name" value="Expansin_CBD"/>
</dbReference>
<dbReference type="InterPro" id="IPR036749">
    <property type="entry name" value="Expansin_CBD_sf"/>
</dbReference>
<dbReference type="InterPro" id="IPR009009">
    <property type="entry name" value="RlpA-like_DPBB"/>
</dbReference>
<dbReference type="InterPro" id="IPR036908">
    <property type="entry name" value="RlpA-like_sf"/>
</dbReference>
<dbReference type="PANTHER" id="PTHR31867">
    <property type="entry name" value="EXPANSIN-A15"/>
    <property type="match status" value="1"/>
</dbReference>
<dbReference type="Pfam" id="PF03330">
    <property type="entry name" value="DPBB_1"/>
    <property type="match status" value="1"/>
</dbReference>
<dbReference type="Pfam" id="PF01357">
    <property type="entry name" value="Expansin_C"/>
    <property type="match status" value="1"/>
</dbReference>
<dbReference type="PRINTS" id="PR01226">
    <property type="entry name" value="EXPANSIN"/>
</dbReference>
<dbReference type="PRINTS" id="PR01225">
    <property type="entry name" value="EXPANSNFAMLY"/>
</dbReference>
<dbReference type="SMART" id="SM00837">
    <property type="entry name" value="DPBB_1"/>
    <property type="match status" value="1"/>
</dbReference>
<dbReference type="SUPFAM" id="SSF50685">
    <property type="entry name" value="Barwin-like endoglucanases"/>
    <property type="match status" value="1"/>
</dbReference>
<dbReference type="SUPFAM" id="SSF49590">
    <property type="entry name" value="PHL pollen allergen"/>
    <property type="match status" value="1"/>
</dbReference>
<dbReference type="PROSITE" id="PS50843">
    <property type="entry name" value="EXPANSIN_CBD"/>
    <property type="match status" value="1"/>
</dbReference>
<dbReference type="PROSITE" id="PS50842">
    <property type="entry name" value="EXPANSIN_EG45"/>
    <property type="match status" value="1"/>
</dbReference>
<accession>O80622</accession>
<accession>Q8VYD1</accession>
<gene>
    <name type="primary">EXPA15</name>
    <name type="synonym">EXP15</name>
    <name type="ordered locus">At2g03090</name>
    <name type="ORF">T17M13.26</name>
</gene>
<organism>
    <name type="scientific">Arabidopsis thaliana</name>
    <name type="common">Mouse-ear cress</name>
    <dbReference type="NCBI Taxonomy" id="3702"/>
    <lineage>
        <taxon>Eukaryota</taxon>
        <taxon>Viridiplantae</taxon>
        <taxon>Streptophyta</taxon>
        <taxon>Embryophyta</taxon>
        <taxon>Tracheophyta</taxon>
        <taxon>Spermatophyta</taxon>
        <taxon>Magnoliopsida</taxon>
        <taxon>eudicotyledons</taxon>
        <taxon>Gunneridae</taxon>
        <taxon>Pentapetalae</taxon>
        <taxon>rosids</taxon>
        <taxon>malvids</taxon>
        <taxon>Brassicales</taxon>
        <taxon>Brassicaceae</taxon>
        <taxon>Camelineae</taxon>
        <taxon>Arabidopsis</taxon>
    </lineage>
</organism>
<name>EXP15_ARATH</name>